<evidence type="ECO:0000305" key="1"/>
<reference key="1">
    <citation type="journal article" date="1987" name="Mol. Microbiol.">
        <title>Cloning and nucleotide sequence analysis of the serotype 2 fimbrial subunit gene of Bordetella pertussis.</title>
        <authorList>
            <person name="Livey I."/>
            <person name="Duggleby C.J."/>
            <person name="Robinson A."/>
        </authorList>
    </citation>
    <scope>NUCLEOTIDE SEQUENCE [GENOMIC DNA]</scope>
    <source>
        <strain>Wellcome 28</strain>
    </source>
</reference>
<reference key="2">
    <citation type="journal article" date="2003" name="Nat. Genet.">
        <title>Comparative analysis of the genome sequences of Bordetella pertussis, Bordetella parapertussis and Bordetella bronchiseptica.</title>
        <authorList>
            <person name="Parkhill J."/>
            <person name="Sebaihia M."/>
            <person name="Preston A."/>
            <person name="Murphy L.D."/>
            <person name="Thomson N.R."/>
            <person name="Harris D.E."/>
            <person name="Holden M.T.G."/>
            <person name="Churcher C.M."/>
            <person name="Bentley S.D."/>
            <person name="Mungall K.L."/>
            <person name="Cerdeno-Tarraga A.-M."/>
            <person name="Temple L."/>
            <person name="James K.D."/>
            <person name="Harris B."/>
            <person name="Quail M.A."/>
            <person name="Achtman M."/>
            <person name="Atkin R."/>
            <person name="Baker S."/>
            <person name="Basham D."/>
            <person name="Bason N."/>
            <person name="Cherevach I."/>
            <person name="Chillingworth T."/>
            <person name="Collins M."/>
            <person name="Cronin A."/>
            <person name="Davis P."/>
            <person name="Doggett J."/>
            <person name="Feltwell T."/>
            <person name="Goble A."/>
            <person name="Hamlin N."/>
            <person name="Hauser H."/>
            <person name="Holroyd S."/>
            <person name="Jagels K."/>
            <person name="Leather S."/>
            <person name="Moule S."/>
            <person name="Norberczak H."/>
            <person name="O'Neil S."/>
            <person name="Ormond D."/>
            <person name="Price C."/>
            <person name="Rabbinowitsch E."/>
            <person name="Rutter S."/>
            <person name="Sanders M."/>
            <person name="Saunders D."/>
            <person name="Seeger K."/>
            <person name="Sharp S."/>
            <person name="Simmonds M."/>
            <person name="Skelton J."/>
            <person name="Squares R."/>
            <person name="Squares S."/>
            <person name="Stevens K."/>
            <person name="Unwin L."/>
            <person name="Whitehead S."/>
            <person name="Barrell B.G."/>
            <person name="Maskell D.J."/>
        </authorList>
    </citation>
    <scope>NUCLEOTIDE SEQUENCE [LARGE SCALE GENOMIC DNA]</scope>
    <source>
        <strain>Tohama I / ATCC BAA-589 / NCTC 13251</strain>
    </source>
</reference>
<protein>
    <recommendedName>
        <fullName>Serotype 2 fimbrial subunit</fullName>
    </recommendedName>
</protein>
<name>FM2_BORPE</name>
<gene>
    <name type="primary">fim2</name>
    <name type="ordered locus">BP1119</name>
</gene>
<comment type="function">
    <text>Bordetella pertussis is the causative agent of whooping cough. An essential step in the disease process is the attachment of the bacteria to the ciliated epithelium of the respiratory tract, enabling the organism to resist normal host-clearance mechanisms. It is unclear which bacterial cell surface component are responsible for adherence but the fimbriae of B.pertussis are prime candidates for being involved in this process.</text>
</comment>
<comment type="subcellular location">
    <subcellularLocation>
        <location>Fimbrium</location>
    </subcellularLocation>
    <text>Pili structure on the cell surface.</text>
</comment>
<comment type="similarity">
    <text evidence="1">Belongs to the fimbrial protein family.</text>
</comment>
<comment type="sequence caution" evidence="1">
    <conflict type="erroneous initiation">
        <sequence resource="EMBL-CDS" id="CAE41417"/>
    </conflict>
</comment>
<keyword id="KW-1015">Disulfide bond</keyword>
<keyword id="KW-0281">Fimbrium</keyword>
<keyword id="KW-1185">Reference proteome</keyword>
<keyword id="KW-0732">Signal</keyword>
<feature type="signal peptide">
    <location>
        <begin position="1"/>
        <end position="26"/>
    </location>
</feature>
<feature type="chain" id="PRO_0000009151" description="Serotype 2 fimbrial subunit">
    <location>
        <begin position="27"/>
        <end position="207"/>
    </location>
</feature>
<feature type="disulfide bond" evidence="1">
    <location>
        <begin position="42"/>
        <end position="85"/>
    </location>
</feature>
<accession>P05788</accession>
<sequence length="207" mass="21950">MQIPFQRALRLCLRAALAAIASAAHADDGTIVITGTITDTTCVIEDPSGPNHTKVVQLPKISKNALKANGDQAGRTPFIIKLKDCPSSLGNGVKAYFEPGPTTDYSTGDLRAYKMVYATNPQTQLSNITAATEAQGVQVRISNLNDSKITMGANEATQQAAGFDPEVQTGGTSRTVTMRYLASYVKKNGDVEASAITTYVGFSVVYP</sequence>
<proteinExistence type="inferred from homology"/>
<dbReference type="EMBL" id="Y00527">
    <property type="protein sequence ID" value="CAA68585.1"/>
    <property type="molecule type" value="Genomic_DNA"/>
</dbReference>
<dbReference type="EMBL" id="BX640414">
    <property type="protein sequence ID" value="CAE41417.1"/>
    <property type="status" value="ALT_INIT"/>
    <property type="molecule type" value="Genomic_DNA"/>
</dbReference>
<dbReference type="PIR" id="S03754">
    <property type="entry name" value="S03754"/>
</dbReference>
<dbReference type="RefSeq" id="NP_879898.1">
    <property type="nucleotide sequence ID" value="NC_002929.2"/>
</dbReference>
<dbReference type="SMR" id="P05788"/>
<dbReference type="STRING" id="257313.BP1119"/>
<dbReference type="PaxDb" id="257313-BP1119"/>
<dbReference type="KEGG" id="bpe:BP1119"/>
<dbReference type="PATRIC" id="fig|257313.5.peg.1198"/>
<dbReference type="eggNOG" id="COG3539">
    <property type="taxonomic scope" value="Bacteria"/>
</dbReference>
<dbReference type="HOGENOM" id="CLU_088965_2_0_4"/>
<dbReference type="Proteomes" id="UP000002676">
    <property type="component" value="Chromosome"/>
</dbReference>
<dbReference type="GO" id="GO:0009289">
    <property type="term" value="C:pilus"/>
    <property type="evidence" value="ECO:0007669"/>
    <property type="project" value="UniProtKB-SubCell"/>
</dbReference>
<dbReference type="GO" id="GO:0043709">
    <property type="term" value="P:cell adhesion involved in single-species biofilm formation"/>
    <property type="evidence" value="ECO:0007669"/>
    <property type="project" value="TreeGrafter"/>
</dbReference>
<dbReference type="Gene3D" id="2.60.40.1090">
    <property type="entry name" value="Fimbrial-type adhesion domain"/>
    <property type="match status" value="1"/>
</dbReference>
<dbReference type="InterPro" id="IPR036937">
    <property type="entry name" value="Adhesion_dom_fimbrial_sf"/>
</dbReference>
<dbReference type="InterPro" id="IPR008966">
    <property type="entry name" value="Adhesion_dom_sf"/>
</dbReference>
<dbReference type="InterPro" id="IPR050263">
    <property type="entry name" value="Bact_Fimbrial_Adh_Pro"/>
</dbReference>
<dbReference type="InterPro" id="IPR039458">
    <property type="entry name" value="FimA-like"/>
</dbReference>
<dbReference type="PANTHER" id="PTHR33420:SF3">
    <property type="entry name" value="FIMBRIAL SUBUNIT ELFA"/>
    <property type="match status" value="1"/>
</dbReference>
<dbReference type="PANTHER" id="PTHR33420">
    <property type="entry name" value="FIMBRIAL SUBUNIT ELFA-RELATED"/>
    <property type="match status" value="1"/>
</dbReference>
<dbReference type="Pfam" id="PF16970">
    <property type="entry name" value="FimA"/>
    <property type="match status" value="1"/>
</dbReference>
<dbReference type="SUPFAM" id="SSF49401">
    <property type="entry name" value="Bacterial adhesins"/>
    <property type="match status" value="1"/>
</dbReference>
<organism>
    <name type="scientific">Bordetella pertussis (strain Tohama I / ATCC BAA-589 / NCTC 13251)</name>
    <dbReference type="NCBI Taxonomy" id="257313"/>
    <lineage>
        <taxon>Bacteria</taxon>
        <taxon>Pseudomonadati</taxon>
        <taxon>Pseudomonadota</taxon>
        <taxon>Betaproteobacteria</taxon>
        <taxon>Burkholderiales</taxon>
        <taxon>Alcaligenaceae</taxon>
        <taxon>Bordetella</taxon>
    </lineage>
</organism>